<sequence length="509" mass="55353">MTAATEQKEKTGTDNVGRVVRVTGPVVDVEFPRGSVPELFNALHAEISYKDLAKTLTLEVAQHLGDSLVRCISMQPTDGLVRGVDVTDTGASISVPVGEGVKGHVFNALGACLDDPGYGKDFEKWSIHRKPPAFDELEPRTEMLETGLKVVDLLTPYVRGGKIALFGGAGVGKTVLIQEMINRIARNFGGTSVFAGVGERTREGNDLWVELADANVLKDTALVFGQMDEPPGTRMRVALSALTMAEYFRDEKQQDVLLFIDNIFRFTQAGSEVSTLLGRMPSAVGYQPTLADEMGELQERITSTRGRSITSMQAVYVPADDYTDPAPATTFAHLDATTELSRSVFSKGIFPAVDPLASSSTILDPSVVGDEHYRVAQEVIRILQRYKDLQDIIAILGIDELAEEDKQLVQRARRIERFLSQNMMAAEQFTGQPGSTVPLKETIEAFDKLSKGDFDHLPEQAFFLIGGLEDLQRKAESLGAKMEDTSGDGAPAQSDSKSDSKGDDADKDA</sequence>
<dbReference type="EC" id="7.1.2.2" evidence="1"/>
<dbReference type="EMBL" id="CP000518">
    <property type="protein sequence ID" value="ABL93142.1"/>
    <property type="molecule type" value="Genomic_DNA"/>
</dbReference>
<dbReference type="SMR" id="A1UJY4"/>
<dbReference type="STRING" id="189918.Mkms_3950"/>
<dbReference type="KEGG" id="mkm:Mkms_3950"/>
<dbReference type="HOGENOM" id="CLU_022398_0_2_11"/>
<dbReference type="OrthoDB" id="9801639at2"/>
<dbReference type="GO" id="GO:0005886">
    <property type="term" value="C:plasma membrane"/>
    <property type="evidence" value="ECO:0007669"/>
    <property type="project" value="UniProtKB-SubCell"/>
</dbReference>
<dbReference type="GO" id="GO:0045259">
    <property type="term" value="C:proton-transporting ATP synthase complex"/>
    <property type="evidence" value="ECO:0007669"/>
    <property type="project" value="UniProtKB-KW"/>
</dbReference>
<dbReference type="GO" id="GO:0005524">
    <property type="term" value="F:ATP binding"/>
    <property type="evidence" value="ECO:0007669"/>
    <property type="project" value="UniProtKB-UniRule"/>
</dbReference>
<dbReference type="GO" id="GO:0016887">
    <property type="term" value="F:ATP hydrolysis activity"/>
    <property type="evidence" value="ECO:0007669"/>
    <property type="project" value="InterPro"/>
</dbReference>
<dbReference type="GO" id="GO:0046933">
    <property type="term" value="F:proton-transporting ATP synthase activity, rotational mechanism"/>
    <property type="evidence" value="ECO:0007669"/>
    <property type="project" value="UniProtKB-UniRule"/>
</dbReference>
<dbReference type="CDD" id="cd18110">
    <property type="entry name" value="ATP-synt_F1_beta_C"/>
    <property type="match status" value="1"/>
</dbReference>
<dbReference type="CDD" id="cd18115">
    <property type="entry name" value="ATP-synt_F1_beta_N"/>
    <property type="match status" value="1"/>
</dbReference>
<dbReference type="CDD" id="cd01133">
    <property type="entry name" value="F1-ATPase_beta_CD"/>
    <property type="match status" value="1"/>
</dbReference>
<dbReference type="FunFam" id="1.10.1140.10:FF:000001">
    <property type="entry name" value="ATP synthase subunit beta"/>
    <property type="match status" value="1"/>
</dbReference>
<dbReference type="FunFam" id="2.40.10.170:FF:000005">
    <property type="entry name" value="ATP synthase subunit beta"/>
    <property type="match status" value="1"/>
</dbReference>
<dbReference type="FunFam" id="3.40.50.300:FF:000004">
    <property type="entry name" value="ATP synthase subunit beta"/>
    <property type="match status" value="1"/>
</dbReference>
<dbReference type="Gene3D" id="2.40.10.170">
    <property type="match status" value="1"/>
</dbReference>
<dbReference type="Gene3D" id="1.10.1140.10">
    <property type="entry name" value="Bovine Mitochondrial F1-atpase, Atp Synthase Beta Chain, Chain D, domain 3"/>
    <property type="match status" value="1"/>
</dbReference>
<dbReference type="Gene3D" id="3.40.50.300">
    <property type="entry name" value="P-loop containing nucleotide triphosphate hydrolases"/>
    <property type="match status" value="1"/>
</dbReference>
<dbReference type="HAMAP" id="MF_01347">
    <property type="entry name" value="ATP_synth_beta_bact"/>
    <property type="match status" value="1"/>
</dbReference>
<dbReference type="InterPro" id="IPR003593">
    <property type="entry name" value="AAA+_ATPase"/>
</dbReference>
<dbReference type="InterPro" id="IPR055190">
    <property type="entry name" value="ATP-synt_VA_C"/>
</dbReference>
<dbReference type="InterPro" id="IPR005722">
    <property type="entry name" value="ATP_synth_F1_bsu"/>
</dbReference>
<dbReference type="InterPro" id="IPR020003">
    <property type="entry name" value="ATPase_a/bsu_AS"/>
</dbReference>
<dbReference type="InterPro" id="IPR050053">
    <property type="entry name" value="ATPase_alpha/beta_chains"/>
</dbReference>
<dbReference type="InterPro" id="IPR004100">
    <property type="entry name" value="ATPase_F1/V1/A1_a/bsu_N"/>
</dbReference>
<dbReference type="InterPro" id="IPR036121">
    <property type="entry name" value="ATPase_F1/V1/A1_a/bsu_N_sf"/>
</dbReference>
<dbReference type="InterPro" id="IPR000194">
    <property type="entry name" value="ATPase_F1/V1/A1_a/bsu_nucl-bd"/>
</dbReference>
<dbReference type="InterPro" id="IPR024034">
    <property type="entry name" value="ATPase_F1/V1_b/a_C"/>
</dbReference>
<dbReference type="InterPro" id="IPR027417">
    <property type="entry name" value="P-loop_NTPase"/>
</dbReference>
<dbReference type="NCBIfam" id="TIGR01039">
    <property type="entry name" value="atpD"/>
    <property type="match status" value="1"/>
</dbReference>
<dbReference type="PANTHER" id="PTHR15184">
    <property type="entry name" value="ATP SYNTHASE"/>
    <property type="match status" value="1"/>
</dbReference>
<dbReference type="PANTHER" id="PTHR15184:SF71">
    <property type="entry name" value="ATP SYNTHASE SUBUNIT BETA, MITOCHONDRIAL"/>
    <property type="match status" value="1"/>
</dbReference>
<dbReference type="Pfam" id="PF00006">
    <property type="entry name" value="ATP-synt_ab"/>
    <property type="match status" value="1"/>
</dbReference>
<dbReference type="Pfam" id="PF02874">
    <property type="entry name" value="ATP-synt_ab_N"/>
    <property type="match status" value="1"/>
</dbReference>
<dbReference type="Pfam" id="PF22919">
    <property type="entry name" value="ATP-synt_VA_C"/>
    <property type="match status" value="1"/>
</dbReference>
<dbReference type="SMART" id="SM00382">
    <property type="entry name" value="AAA"/>
    <property type="match status" value="1"/>
</dbReference>
<dbReference type="SUPFAM" id="SSF47917">
    <property type="entry name" value="C-terminal domain of alpha and beta subunits of F1 ATP synthase"/>
    <property type="match status" value="1"/>
</dbReference>
<dbReference type="SUPFAM" id="SSF50615">
    <property type="entry name" value="N-terminal domain of alpha and beta subunits of F1 ATP synthase"/>
    <property type="match status" value="1"/>
</dbReference>
<dbReference type="SUPFAM" id="SSF52540">
    <property type="entry name" value="P-loop containing nucleoside triphosphate hydrolases"/>
    <property type="match status" value="1"/>
</dbReference>
<dbReference type="PROSITE" id="PS00152">
    <property type="entry name" value="ATPASE_ALPHA_BETA"/>
    <property type="match status" value="1"/>
</dbReference>
<organism>
    <name type="scientific">Mycobacterium sp. (strain KMS)</name>
    <dbReference type="NCBI Taxonomy" id="189918"/>
    <lineage>
        <taxon>Bacteria</taxon>
        <taxon>Bacillati</taxon>
        <taxon>Actinomycetota</taxon>
        <taxon>Actinomycetes</taxon>
        <taxon>Mycobacteriales</taxon>
        <taxon>Mycobacteriaceae</taxon>
        <taxon>Mycobacterium</taxon>
    </lineage>
</organism>
<reference key="1">
    <citation type="submission" date="2006-12" db="EMBL/GenBank/DDBJ databases">
        <title>Complete sequence of chromosome of Mycobacterium sp. KMS.</title>
        <authorList>
            <consortium name="US DOE Joint Genome Institute"/>
            <person name="Copeland A."/>
            <person name="Lucas S."/>
            <person name="Lapidus A."/>
            <person name="Barry K."/>
            <person name="Detter J.C."/>
            <person name="Glavina del Rio T."/>
            <person name="Hammon N."/>
            <person name="Israni S."/>
            <person name="Dalin E."/>
            <person name="Tice H."/>
            <person name="Pitluck S."/>
            <person name="Kiss H."/>
            <person name="Brettin T."/>
            <person name="Bruce D."/>
            <person name="Han C."/>
            <person name="Tapia R."/>
            <person name="Gilna P."/>
            <person name="Schmutz J."/>
            <person name="Larimer F."/>
            <person name="Land M."/>
            <person name="Hauser L."/>
            <person name="Kyrpides N."/>
            <person name="Mikhailova N."/>
            <person name="Miller C.D."/>
            <person name="Richardson P."/>
        </authorList>
    </citation>
    <scope>NUCLEOTIDE SEQUENCE [LARGE SCALE GENOMIC DNA]</scope>
    <source>
        <strain>KMS</strain>
    </source>
</reference>
<keyword id="KW-0066">ATP synthesis</keyword>
<keyword id="KW-0067">ATP-binding</keyword>
<keyword id="KW-1003">Cell membrane</keyword>
<keyword id="KW-0139">CF(1)</keyword>
<keyword id="KW-0375">Hydrogen ion transport</keyword>
<keyword id="KW-0406">Ion transport</keyword>
<keyword id="KW-0472">Membrane</keyword>
<keyword id="KW-0547">Nucleotide-binding</keyword>
<keyword id="KW-1278">Translocase</keyword>
<keyword id="KW-0813">Transport</keyword>
<gene>
    <name evidence="1" type="primary">atpD</name>
    <name type="ordered locus">Mkms_3950</name>
</gene>
<comment type="function">
    <text evidence="1">Produces ATP from ADP in the presence of a proton gradient across the membrane. The catalytic sites are hosted primarily by the beta subunits.</text>
</comment>
<comment type="catalytic activity">
    <reaction evidence="1">
        <text>ATP + H2O + 4 H(+)(in) = ADP + phosphate + 5 H(+)(out)</text>
        <dbReference type="Rhea" id="RHEA:57720"/>
        <dbReference type="ChEBI" id="CHEBI:15377"/>
        <dbReference type="ChEBI" id="CHEBI:15378"/>
        <dbReference type="ChEBI" id="CHEBI:30616"/>
        <dbReference type="ChEBI" id="CHEBI:43474"/>
        <dbReference type="ChEBI" id="CHEBI:456216"/>
        <dbReference type="EC" id="7.1.2.2"/>
    </reaction>
</comment>
<comment type="subunit">
    <text evidence="1">F-type ATPases have 2 components, CF(1) - the catalytic core - and CF(0) - the membrane proton channel. CF(1) has five subunits: alpha(3), beta(3), gamma(1), delta(1), epsilon(1). CF(0) has three main subunits: a(1), b(2) and c(9-12). The alpha and beta chains form an alternating ring which encloses part of the gamma chain. CF(1) is attached to CF(0) by a central stalk formed by the gamma and epsilon chains, while a peripheral stalk is formed by the delta and b chains.</text>
</comment>
<comment type="subcellular location">
    <subcellularLocation>
        <location evidence="1">Cell membrane</location>
        <topology evidence="1">Peripheral membrane protein</topology>
    </subcellularLocation>
</comment>
<comment type="similarity">
    <text evidence="1">Belongs to the ATPase alpha/beta chains family.</text>
</comment>
<name>ATPB_MYCSK</name>
<proteinExistence type="inferred from homology"/>
<accession>A1UJY4</accession>
<protein>
    <recommendedName>
        <fullName evidence="1">ATP synthase subunit beta</fullName>
        <ecNumber evidence="1">7.1.2.2</ecNumber>
    </recommendedName>
    <alternativeName>
        <fullName evidence="1">ATP synthase F1 sector subunit beta</fullName>
    </alternativeName>
    <alternativeName>
        <fullName evidence="1">F-ATPase subunit beta</fullName>
    </alternativeName>
</protein>
<feature type="chain" id="PRO_0000339551" description="ATP synthase subunit beta">
    <location>
        <begin position="1"/>
        <end position="509"/>
    </location>
</feature>
<feature type="region of interest" description="Disordered" evidence="2">
    <location>
        <begin position="476"/>
        <end position="509"/>
    </location>
</feature>
<feature type="compositionally biased region" description="Basic and acidic residues" evidence="2">
    <location>
        <begin position="496"/>
        <end position="509"/>
    </location>
</feature>
<feature type="binding site" evidence="1">
    <location>
        <begin position="167"/>
        <end position="174"/>
    </location>
    <ligand>
        <name>ATP</name>
        <dbReference type="ChEBI" id="CHEBI:30616"/>
    </ligand>
</feature>
<evidence type="ECO:0000255" key="1">
    <source>
        <dbReference type="HAMAP-Rule" id="MF_01347"/>
    </source>
</evidence>
<evidence type="ECO:0000256" key="2">
    <source>
        <dbReference type="SAM" id="MobiDB-lite"/>
    </source>
</evidence>